<feature type="chain" id="PRO_0000414148" description="tRNA (guanine(37)-N(1))-methyltransferase">
    <location>
        <begin position="1"/>
        <end position="698"/>
    </location>
</feature>
<feature type="region of interest" description="Disordered" evidence="2">
    <location>
        <begin position="207"/>
        <end position="242"/>
    </location>
</feature>
<feature type="binding site" evidence="1">
    <location>
        <position position="427"/>
    </location>
    <ligand>
        <name>S-adenosyl-L-methionine</name>
        <dbReference type="ChEBI" id="CHEBI:59789"/>
    </ligand>
</feature>
<feature type="binding site" evidence="1">
    <location>
        <begin position="465"/>
        <end position="466"/>
    </location>
    <ligand>
        <name>S-adenosyl-L-methionine</name>
        <dbReference type="ChEBI" id="CHEBI:59789"/>
    </ligand>
</feature>
<feature type="binding site" evidence="1">
    <location>
        <begin position="494"/>
        <end position="495"/>
    </location>
    <ligand>
        <name>S-adenosyl-L-methionine</name>
        <dbReference type="ChEBI" id="CHEBI:59789"/>
    </ligand>
</feature>
<feature type="binding site" evidence="1">
    <location>
        <position position="536"/>
    </location>
    <ligand>
        <name>S-adenosyl-L-methionine</name>
        <dbReference type="ChEBI" id="CHEBI:59789"/>
    </ligand>
</feature>
<evidence type="ECO:0000255" key="1">
    <source>
        <dbReference type="HAMAP-Rule" id="MF_03152"/>
    </source>
</evidence>
<evidence type="ECO:0000256" key="2">
    <source>
        <dbReference type="SAM" id="MobiDB-lite"/>
    </source>
</evidence>
<evidence type="ECO:0000305" key="3"/>
<accession>A4H8F7</accession>
<name>TRM5_LEIBR</name>
<protein>
    <recommendedName>
        <fullName evidence="1">tRNA (guanine(37)-N(1))-methyltransferase</fullName>
        <ecNumber evidence="1">2.1.1.228</ecNumber>
    </recommendedName>
    <alternativeName>
        <fullName evidence="1">M1G-methyltransferase</fullName>
    </alternativeName>
    <alternativeName>
        <fullName evidence="1">tRNA [GM37] methyltransferase</fullName>
    </alternativeName>
    <alternativeName>
        <fullName evidence="1">tRNA methyltransferase 5 homolog</fullName>
    </alternativeName>
</protein>
<reference key="1">
    <citation type="journal article" date="2007" name="Nat. Genet.">
        <title>Comparative genomic analysis of three Leishmania species that cause diverse human disease.</title>
        <authorList>
            <person name="Peacock C.S."/>
            <person name="Seeger K."/>
            <person name="Harris D."/>
            <person name="Murphy L."/>
            <person name="Ruiz J.C."/>
            <person name="Quail M.A."/>
            <person name="Peters N."/>
            <person name="Adlem E."/>
            <person name="Tivey A."/>
            <person name="Aslett M."/>
            <person name="Kerhornou A."/>
            <person name="Ivens A."/>
            <person name="Fraser A."/>
            <person name="Rajandream M.-A."/>
            <person name="Carver T."/>
            <person name="Norbertczak H."/>
            <person name="Chillingworth T."/>
            <person name="Hance Z."/>
            <person name="Jagels K."/>
            <person name="Moule S."/>
            <person name="Ormond D."/>
            <person name="Rutter S."/>
            <person name="Sqaures R."/>
            <person name="Whitehead S."/>
            <person name="Rabbinowitsch E."/>
            <person name="Arrowsmith C."/>
            <person name="White B."/>
            <person name="Thurston S."/>
            <person name="Bringaud F."/>
            <person name="Baldauf S.L."/>
            <person name="Faulconbridge A."/>
            <person name="Jeffares D."/>
            <person name="Depledge D.P."/>
            <person name="Oyola S.O."/>
            <person name="Hilley J.D."/>
            <person name="Brito L.O."/>
            <person name="Tosi L.R.O."/>
            <person name="Barrell B."/>
            <person name="Cruz A.K."/>
            <person name="Mottram J.C."/>
            <person name="Smith D.F."/>
            <person name="Berriman M."/>
        </authorList>
    </citation>
    <scope>NUCLEOTIDE SEQUENCE [LARGE SCALE GENOMIC DNA]</scope>
    <source>
        <strain>MHOM/BR/75/M2904</strain>
    </source>
</reference>
<organism>
    <name type="scientific">Leishmania braziliensis</name>
    <dbReference type="NCBI Taxonomy" id="5660"/>
    <lineage>
        <taxon>Eukaryota</taxon>
        <taxon>Discoba</taxon>
        <taxon>Euglenozoa</taxon>
        <taxon>Kinetoplastea</taxon>
        <taxon>Metakinetoplastina</taxon>
        <taxon>Trypanosomatida</taxon>
        <taxon>Trypanosomatidae</taxon>
        <taxon>Leishmaniinae</taxon>
        <taxon>Leishmania</taxon>
        <taxon>Leishmania braziliensis species complex</taxon>
    </lineage>
</organism>
<proteinExistence type="inferred from homology"/>
<keyword id="KW-0963">Cytoplasm</keyword>
<keyword id="KW-0489">Methyltransferase</keyword>
<keyword id="KW-0496">Mitochondrion</keyword>
<keyword id="KW-0539">Nucleus</keyword>
<keyword id="KW-1185">Reference proteome</keyword>
<keyword id="KW-0949">S-adenosyl-L-methionine</keyword>
<keyword id="KW-0808">Transferase</keyword>
<keyword id="KW-0819">tRNA processing</keyword>
<gene>
    <name type="ORF">LBRM_16_0320</name>
</gene>
<sequence length="698" mass="74844">MSARPTDASMEPRAVPHSYRKRVHSTVELAALVYQPLEASGALLSILRGKLYHQRNVRSVLDVVAVPTDTGDQGHSAASKVRVEYLAPPSNKANRNSSSNISCALRDDIQRGSRAAATCNSSSPPTPPAFLEGCCKMCLLDPTVLEAAELWPDPTSVTQNSTPVFLLGAGIPGARVTQQLEAALQTGQLPRKAADLLQQLHERLAASPPSVSLTENQDGDPQAQDSLRAVAAPPSPSSRKRGSYVGAVEVTFASRTVELSYRNYTMSELLSMVLPLREDADLVALSGFEQVGHIAHVNLSAAHLPYADVIGQVILDCNETVSVVVNKVDAISSVFREFKMNIIGERRRADDLGGDVGVGANVSDSGEVGDSLTAEEKAVIALEASSLNSPAEARLNRMLTAAVRQHGCCFRVPYNRVYWNSRLSFEHARLVGQMRPGDVLFDVMAGVGPFAVPAAKKGVKVFANDLNPVAAQYMKVNAELNRLPANSFHVFNMDGRHFLNSVLFDSITGAAASKIEATATSHPGCVCTGRRHVTMNLPAVAVEFLDVFQPLSNTSSLAGEQQSNAATAVAVNERWNRLPAHVEPNDIDQGTLFHVYSFSAAEDLIADAVRQVEANLGYTLPPESIEEVLMVRDVAPTKRMMCVSFTLPPAFWANLLASQPGNDGASFTHAETVSALVEEGAEPTIKRAKADALLTRGV</sequence>
<dbReference type="EC" id="2.1.1.228" evidence="1"/>
<dbReference type="EMBL" id="FR798990">
    <property type="protein sequence ID" value="CAM37671.1"/>
    <property type="molecule type" value="Genomic_DNA"/>
</dbReference>
<dbReference type="RefSeq" id="XP_001563636.1">
    <property type="nucleotide sequence ID" value="XM_001563586.1"/>
</dbReference>
<dbReference type="FunCoup" id="A4H8F7">
    <property type="interactions" value="213"/>
</dbReference>
<dbReference type="STRING" id="5660.A4H8F7"/>
<dbReference type="GeneID" id="5414156"/>
<dbReference type="KEGG" id="lbz:LBRM_16_0320"/>
<dbReference type="VEuPathDB" id="TriTrypDB:LbrM.16.0320"/>
<dbReference type="InParanoid" id="A4H8F7"/>
<dbReference type="OMA" id="CKMCLLD"/>
<dbReference type="Proteomes" id="UP000007258">
    <property type="component" value="Chromosome 16"/>
</dbReference>
<dbReference type="GO" id="GO:0005759">
    <property type="term" value="C:mitochondrial matrix"/>
    <property type="evidence" value="ECO:0007669"/>
    <property type="project" value="UniProtKB-SubCell"/>
</dbReference>
<dbReference type="GO" id="GO:0005634">
    <property type="term" value="C:nucleus"/>
    <property type="evidence" value="ECO:0007669"/>
    <property type="project" value="UniProtKB-SubCell"/>
</dbReference>
<dbReference type="GO" id="GO:0052906">
    <property type="term" value="F:tRNA (guanine(37)-N1)-methyltransferase activity"/>
    <property type="evidence" value="ECO:0007669"/>
    <property type="project" value="UniProtKB-UniRule"/>
</dbReference>
<dbReference type="GO" id="GO:0002939">
    <property type="term" value="P:tRNA N1-guanine methylation"/>
    <property type="evidence" value="ECO:0007669"/>
    <property type="project" value="TreeGrafter"/>
</dbReference>
<dbReference type="FunFam" id="3.30.300.110:FF:000005">
    <property type="entry name" value="tRNA (guanine(37)-N1)-methyltransferase"/>
    <property type="match status" value="1"/>
</dbReference>
<dbReference type="FunFam" id="3.40.50.150:FF:000765">
    <property type="entry name" value="tRNA (guanine(37)-N1)-methyltransferase"/>
    <property type="match status" value="1"/>
</dbReference>
<dbReference type="Gene3D" id="3.30.300.110">
    <property type="entry name" value="Met-10+ protein-like domains"/>
    <property type="match status" value="1"/>
</dbReference>
<dbReference type="Gene3D" id="3.40.50.150">
    <property type="entry name" value="Vaccinia Virus protein VP39"/>
    <property type="match status" value="1"/>
</dbReference>
<dbReference type="HAMAP" id="MF_03152">
    <property type="entry name" value="TRM5"/>
    <property type="match status" value="1"/>
</dbReference>
<dbReference type="InterPro" id="IPR030382">
    <property type="entry name" value="MeTrfase_TRM5/TYW2"/>
</dbReference>
<dbReference type="InterPro" id="IPR029063">
    <property type="entry name" value="SAM-dependent_MTases_sf"/>
</dbReference>
<dbReference type="InterPro" id="IPR056743">
    <property type="entry name" value="TRM5-TYW2-like_MTfase"/>
</dbReference>
<dbReference type="InterPro" id="IPR056744">
    <property type="entry name" value="TRM5/TYW2-like_N"/>
</dbReference>
<dbReference type="InterPro" id="IPR025792">
    <property type="entry name" value="tRNA_Gua_MeTrfase_euk"/>
</dbReference>
<dbReference type="PANTHER" id="PTHR23245:SF43">
    <property type="entry name" value="TRNA (GUANINE(37)-N1)-METHYLTRANSFERASE 2"/>
    <property type="match status" value="1"/>
</dbReference>
<dbReference type="PANTHER" id="PTHR23245">
    <property type="entry name" value="TRNA METHYLTRANSFERASE"/>
    <property type="match status" value="1"/>
</dbReference>
<dbReference type="Pfam" id="PF02475">
    <property type="entry name" value="TRM5-TYW2_MTfase"/>
    <property type="match status" value="1"/>
</dbReference>
<dbReference type="Pfam" id="PF25133">
    <property type="entry name" value="TYW2_N_2"/>
    <property type="match status" value="1"/>
</dbReference>
<dbReference type="SUPFAM" id="SSF53335">
    <property type="entry name" value="S-adenosyl-L-methionine-dependent methyltransferases"/>
    <property type="match status" value="1"/>
</dbReference>
<dbReference type="PROSITE" id="PS51684">
    <property type="entry name" value="SAM_MT_TRM5_TYW2"/>
    <property type="match status" value="1"/>
</dbReference>
<comment type="function">
    <text evidence="1">Specifically methylates the N1 position of guanosine-37 in various cytoplasmic and mitochondrial tRNAs. Methylation is not dependent on the nature of the nucleoside 5' of the target nucleoside. This is the first step in the biosynthesis of wybutosine (yW), a modified base adjacent to the anticodon of tRNAs and required for accurate decoding.</text>
</comment>
<comment type="catalytic activity">
    <reaction evidence="1">
        <text>guanosine(37) in tRNA + S-adenosyl-L-methionine = N(1)-methylguanosine(37) in tRNA + S-adenosyl-L-homocysteine + H(+)</text>
        <dbReference type="Rhea" id="RHEA:36899"/>
        <dbReference type="Rhea" id="RHEA-COMP:10145"/>
        <dbReference type="Rhea" id="RHEA-COMP:10147"/>
        <dbReference type="ChEBI" id="CHEBI:15378"/>
        <dbReference type="ChEBI" id="CHEBI:57856"/>
        <dbReference type="ChEBI" id="CHEBI:59789"/>
        <dbReference type="ChEBI" id="CHEBI:73542"/>
        <dbReference type="ChEBI" id="CHEBI:74269"/>
        <dbReference type="EC" id="2.1.1.228"/>
    </reaction>
</comment>
<comment type="subunit">
    <text evidence="1">Monomer.</text>
</comment>
<comment type="subcellular location">
    <subcellularLocation>
        <location evidence="1">Mitochondrion matrix</location>
    </subcellularLocation>
    <subcellularLocation>
        <location evidence="1">Nucleus</location>
    </subcellularLocation>
    <subcellularLocation>
        <location evidence="1">Cytoplasm</location>
    </subcellularLocation>
    <text evidence="1">Predominantly in the mitochondria and in the nucleus.</text>
</comment>
<comment type="similarity">
    <text evidence="3">Belongs to the class I-like SAM-binding methyltransferase superfamily. TRM5/TYW2 family.</text>
</comment>